<comment type="function">
    <text evidence="1">Produces ATP from ADP in the presence of a proton gradient across the membrane. The gamma chain is believed to be important in regulating ATPase activity and the flow of protons through the CF(0) complex.</text>
</comment>
<comment type="subunit">
    <text evidence="1">F-type ATPases have 2 components, CF(1) - the catalytic core - and CF(0) - the membrane proton channel. CF(1) has five subunits: alpha(3), beta(3), gamma(1), delta(1), epsilon(1). CF(0) has three main subunits: a, b and c.</text>
</comment>
<comment type="subcellular location">
    <subcellularLocation>
        <location evidence="1">Cell inner membrane</location>
        <topology evidence="1">Peripheral membrane protein</topology>
    </subcellularLocation>
</comment>
<comment type="similarity">
    <text evidence="1">Belongs to the ATPase gamma chain family.</text>
</comment>
<reference key="1">
    <citation type="submission" date="2008-02" db="EMBL/GenBank/DDBJ databases">
        <title>Complete sequence of Pseudomonas putida W619.</title>
        <authorList>
            <person name="Copeland A."/>
            <person name="Lucas S."/>
            <person name="Lapidus A."/>
            <person name="Barry K."/>
            <person name="Detter J.C."/>
            <person name="Glavina del Rio T."/>
            <person name="Dalin E."/>
            <person name="Tice H."/>
            <person name="Pitluck S."/>
            <person name="Chain P."/>
            <person name="Malfatti S."/>
            <person name="Shin M."/>
            <person name="Vergez L."/>
            <person name="Schmutz J."/>
            <person name="Larimer F."/>
            <person name="Land M."/>
            <person name="Hauser L."/>
            <person name="Kyrpides N."/>
            <person name="Kim E."/>
            <person name="Taghavi S."/>
            <person name="Vangronsveld D."/>
            <person name="van der Lelie D."/>
            <person name="Richardson P."/>
        </authorList>
    </citation>
    <scope>NUCLEOTIDE SEQUENCE [LARGE SCALE GENOMIC DNA]</scope>
    <source>
        <strain>W619</strain>
    </source>
</reference>
<proteinExistence type="inferred from homology"/>
<dbReference type="EMBL" id="CP000949">
    <property type="protein sequence ID" value="ACA75676.1"/>
    <property type="molecule type" value="Genomic_DNA"/>
</dbReference>
<dbReference type="SMR" id="B1JFU2"/>
<dbReference type="STRING" id="390235.PputW619_5201"/>
<dbReference type="KEGG" id="ppw:PputW619_5201"/>
<dbReference type="eggNOG" id="COG0224">
    <property type="taxonomic scope" value="Bacteria"/>
</dbReference>
<dbReference type="HOGENOM" id="CLU_050669_0_1_6"/>
<dbReference type="OrthoDB" id="9812769at2"/>
<dbReference type="GO" id="GO:0005886">
    <property type="term" value="C:plasma membrane"/>
    <property type="evidence" value="ECO:0007669"/>
    <property type="project" value="UniProtKB-SubCell"/>
</dbReference>
<dbReference type="GO" id="GO:0045259">
    <property type="term" value="C:proton-transporting ATP synthase complex"/>
    <property type="evidence" value="ECO:0007669"/>
    <property type="project" value="UniProtKB-KW"/>
</dbReference>
<dbReference type="GO" id="GO:0005524">
    <property type="term" value="F:ATP binding"/>
    <property type="evidence" value="ECO:0007669"/>
    <property type="project" value="UniProtKB-UniRule"/>
</dbReference>
<dbReference type="GO" id="GO:0046933">
    <property type="term" value="F:proton-transporting ATP synthase activity, rotational mechanism"/>
    <property type="evidence" value="ECO:0007669"/>
    <property type="project" value="UniProtKB-UniRule"/>
</dbReference>
<dbReference type="GO" id="GO:0042777">
    <property type="term" value="P:proton motive force-driven plasma membrane ATP synthesis"/>
    <property type="evidence" value="ECO:0007669"/>
    <property type="project" value="UniProtKB-UniRule"/>
</dbReference>
<dbReference type="CDD" id="cd12151">
    <property type="entry name" value="F1-ATPase_gamma"/>
    <property type="match status" value="1"/>
</dbReference>
<dbReference type="FunFam" id="1.10.287.80:FF:000005">
    <property type="entry name" value="ATP synthase gamma chain"/>
    <property type="match status" value="1"/>
</dbReference>
<dbReference type="FunFam" id="3.40.1380.10:FF:000001">
    <property type="entry name" value="ATP synthase gamma chain"/>
    <property type="match status" value="1"/>
</dbReference>
<dbReference type="Gene3D" id="3.40.1380.10">
    <property type="match status" value="1"/>
</dbReference>
<dbReference type="Gene3D" id="1.10.287.80">
    <property type="entry name" value="ATP synthase, gamma subunit, helix hairpin domain"/>
    <property type="match status" value="1"/>
</dbReference>
<dbReference type="HAMAP" id="MF_00815">
    <property type="entry name" value="ATP_synth_gamma_bact"/>
    <property type="match status" value="1"/>
</dbReference>
<dbReference type="InterPro" id="IPR035968">
    <property type="entry name" value="ATP_synth_F1_ATPase_gsu"/>
</dbReference>
<dbReference type="InterPro" id="IPR000131">
    <property type="entry name" value="ATP_synth_F1_gsu"/>
</dbReference>
<dbReference type="InterPro" id="IPR023632">
    <property type="entry name" value="ATP_synth_F1_gsu_CS"/>
</dbReference>
<dbReference type="NCBIfam" id="TIGR01146">
    <property type="entry name" value="ATPsyn_F1gamma"/>
    <property type="match status" value="1"/>
</dbReference>
<dbReference type="NCBIfam" id="NF004144">
    <property type="entry name" value="PRK05621.1-1"/>
    <property type="match status" value="1"/>
</dbReference>
<dbReference type="PANTHER" id="PTHR11693">
    <property type="entry name" value="ATP SYNTHASE GAMMA CHAIN"/>
    <property type="match status" value="1"/>
</dbReference>
<dbReference type="PANTHER" id="PTHR11693:SF22">
    <property type="entry name" value="ATP SYNTHASE SUBUNIT GAMMA, MITOCHONDRIAL"/>
    <property type="match status" value="1"/>
</dbReference>
<dbReference type="Pfam" id="PF00231">
    <property type="entry name" value="ATP-synt"/>
    <property type="match status" value="1"/>
</dbReference>
<dbReference type="PRINTS" id="PR00126">
    <property type="entry name" value="ATPASEGAMMA"/>
</dbReference>
<dbReference type="SUPFAM" id="SSF52943">
    <property type="entry name" value="ATP synthase (F1-ATPase), gamma subunit"/>
    <property type="match status" value="1"/>
</dbReference>
<dbReference type="PROSITE" id="PS00153">
    <property type="entry name" value="ATPASE_GAMMA"/>
    <property type="match status" value="1"/>
</dbReference>
<keyword id="KW-0066">ATP synthesis</keyword>
<keyword id="KW-0997">Cell inner membrane</keyword>
<keyword id="KW-1003">Cell membrane</keyword>
<keyword id="KW-0139">CF(1)</keyword>
<keyword id="KW-0375">Hydrogen ion transport</keyword>
<keyword id="KW-0406">Ion transport</keyword>
<keyword id="KW-0472">Membrane</keyword>
<keyword id="KW-0813">Transport</keyword>
<name>ATPG_PSEPW</name>
<gene>
    <name evidence="1" type="primary">atpG</name>
    <name type="ordered locus">PputW619_5201</name>
</gene>
<protein>
    <recommendedName>
        <fullName evidence="1">ATP synthase gamma chain</fullName>
    </recommendedName>
    <alternativeName>
        <fullName evidence="1">ATP synthase F1 sector gamma subunit</fullName>
    </alternativeName>
    <alternativeName>
        <fullName evidence="1">F-ATPase gamma subunit</fullName>
    </alternativeName>
</protein>
<sequence length="286" mass="31451">MAGAKEIRSKIASIKSTQKITSAMEKVAVSKMRKAQMRMAASRPYAERIRQVIGHLANANPEYRHPFMIERPVKRAGYIVVSSDRGLCGGLNTNLFKALVKDMNVNREQGVEIDLCVIGSKGATFFRIFGGNVVAAISHLGEEPSINDLIGSVKVMLDAYLDGRIDRLSVVSNKFVNTMTQTPTVEQLVPLVATPDQELKHHWDYLYEPDAKELLDGLMVRYVESQVYQAVVENNAAEQAARMIAMKNATDNAGDLISELQLIYNKARQAAITQEISEIVGGAAAV</sequence>
<feature type="chain" id="PRO_1000134192" description="ATP synthase gamma chain">
    <location>
        <begin position="1"/>
        <end position="286"/>
    </location>
</feature>
<accession>B1JFU2</accession>
<organism>
    <name type="scientific">Pseudomonas putida (strain W619)</name>
    <dbReference type="NCBI Taxonomy" id="390235"/>
    <lineage>
        <taxon>Bacteria</taxon>
        <taxon>Pseudomonadati</taxon>
        <taxon>Pseudomonadota</taxon>
        <taxon>Gammaproteobacteria</taxon>
        <taxon>Pseudomonadales</taxon>
        <taxon>Pseudomonadaceae</taxon>
        <taxon>Pseudomonas</taxon>
    </lineage>
</organism>
<evidence type="ECO:0000255" key="1">
    <source>
        <dbReference type="HAMAP-Rule" id="MF_00815"/>
    </source>
</evidence>